<reference key="1">
    <citation type="submission" date="2007-08" db="EMBL/GenBank/DDBJ databases">
        <title>Complete sequence of Roseiflexus castenholzii DSM 13941.</title>
        <authorList>
            <consortium name="US DOE Joint Genome Institute"/>
            <person name="Copeland A."/>
            <person name="Lucas S."/>
            <person name="Lapidus A."/>
            <person name="Barry K."/>
            <person name="Glavina del Rio T."/>
            <person name="Dalin E."/>
            <person name="Tice H."/>
            <person name="Pitluck S."/>
            <person name="Thompson L.S."/>
            <person name="Brettin T."/>
            <person name="Bruce D."/>
            <person name="Detter J.C."/>
            <person name="Han C."/>
            <person name="Tapia R."/>
            <person name="Schmutz J."/>
            <person name="Larimer F."/>
            <person name="Land M."/>
            <person name="Hauser L."/>
            <person name="Kyrpides N."/>
            <person name="Mikhailova N."/>
            <person name="Bryant D.A."/>
            <person name="Hanada S."/>
            <person name="Tsukatani Y."/>
            <person name="Richardson P."/>
        </authorList>
    </citation>
    <scope>NUCLEOTIDE SEQUENCE [LARGE SCALE GENOMIC DNA]</scope>
    <source>
        <strain>DSM 13941 / HLO8</strain>
    </source>
</reference>
<sequence>MKTYAQKASEVQRDWYVIDATNQTLGRLATQIATLLRGKHKPTFSPYIDGGDFVIVVNAERIRLTGRKPEQKMYYRHSNYPGGFKAVSFKQLIARHPERVLRFAVKGMLPKTRLGRRQLAKLKIYAGPKHPHAAQQPKVYEPRPRG</sequence>
<accession>A7NR33</accession>
<comment type="function">
    <text evidence="1">This protein is one of the early assembly proteins of the 50S ribosomal subunit, although it is not seen to bind rRNA by itself. It is important during the early stages of 50S assembly.</text>
</comment>
<comment type="subunit">
    <text evidence="1">Part of the 50S ribosomal subunit.</text>
</comment>
<comment type="similarity">
    <text evidence="1">Belongs to the universal ribosomal protein uL13 family.</text>
</comment>
<keyword id="KW-1185">Reference proteome</keyword>
<keyword id="KW-0687">Ribonucleoprotein</keyword>
<keyword id="KW-0689">Ribosomal protein</keyword>
<organism>
    <name type="scientific">Roseiflexus castenholzii (strain DSM 13941 / HLO8)</name>
    <dbReference type="NCBI Taxonomy" id="383372"/>
    <lineage>
        <taxon>Bacteria</taxon>
        <taxon>Bacillati</taxon>
        <taxon>Chloroflexota</taxon>
        <taxon>Chloroflexia</taxon>
        <taxon>Chloroflexales</taxon>
        <taxon>Roseiflexineae</taxon>
        <taxon>Roseiflexaceae</taxon>
        <taxon>Roseiflexus</taxon>
    </lineage>
</organism>
<evidence type="ECO:0000255" key="1">
    <source>
        <dbReference type="HAMAP-Rule" id="MF_01366"/>
    </source>
</evidence>
<evidence type="ECO:0000256" key="2">
    <source>
        <dbReference type="SAM" id="MobiDB-lite"/>
    </source>
</evidence>
<evidence type="ECO:0000305" key="3"/>
<feature type="chain" id="PRO_1000087102" description="Large ribosomal subunit protein uL13">
    <location>
        <begin position="1"/>
        <end position="146"/>
    </location>
</feature>
<feature type="region of interest" description="Disordered" evidence="2">
    <location>
        <begin position="126"/>
        <end position="146"/>
    </location>
</feature>
<protein>
    <recommendedName>
        <fullName evidence="1">Large ribosomal subunit protein uL13</fullName>
    </recommendedName>
    <alternativeName>
        <fullName evidence="3">50S ribosomal protein L13</fullName>
    </alternativeName>
</protein>
<name>RL13_ROSCS</name>
<gene>
    <name evidence="1" type="primary">rplM</name>
    <name type="ordered locus">Rcas_3996</name>
</gene>
<dbReference type="EMBL" id="CP000804">
    <property type="protein sequence ID" value="ABU60029.1"/>
    <property type="molecule type" value="Genomic_DNA"/>
</dbReference>
<dbReference type="RefSeq" id="WP_012122452.1">
    <property type="nucleotide sequence ID" value="NC_009767.1"/>
</dbReference>
<dbReference type="SMR" id="A7NR33"/>
<dbReference type="STRING" id="383372.Rcas_3996"/>
<dbReference type="KEGG" id="rca:Rcas_3996"/>
<dbReference type="eggNOG" id="COG0102">
    <property type="taxonomic scope" value="Bacteria"/>
</dbReference>
<dbReference type="HOGENOM" id="CLU_082184_2_2_0"/>
<dbReference type="OrthoDB" id="9801330at2"/>
<dbReference type="Proteomes" id="UP000000263">
    <property type="component" value="Chromosome"/>
</dbReference>
<dbReference type="GO" id="GO:0022625">
    <property type="term" value="C:cytosolic large ribosomal subunit"/>
    <property type="evidence" value="ECO:0007669"/>
    <property type="project" value="TreeGrafter"/>
</dbReference>
<dbReference type="GO" id="GO:0003729">
    <property type="term" value="F:mRNA binding"/>
    <property type="evidence" value="ECO:0007669"/>
    <property type="project" value="TreeGrafter"/>
</dbReference>
<dbReference type="GO" id="GO:0003735">
    <property type="term" value="F:structural constituent of ribosome"/>
    <property type="evidence" value="ECO:0007669"/>
    <property type="project" value="InterPro"/>
</dbReference>
<dbReference type="GO" id="GO:0017148">
    <property type="term" value="P:negative regulation of translation"/>
    <property type="evidence" value="ECO:0007669"/>
    <property type="project" value="TreeGrafter"/>
</dbReference>
<dbReference type="GO" id="GO:0006412">
    <property type="term" value="P:translation"/>
    <property type="evidence" value="ECO:0007669"/>
    <property type="project" value="UniProtKB-UniRule"/>
</dbReference>
<dbReference type="CDD" id="cd00392">
    <property type="entry name" value="Ribosomal_L13"/>
    <property type="match status" value="1"/>
</dbReference>
<dbReference type="FunFam" id="3.90.1180.10:FF:000001">
    <property type="entry name" value="50S ribosomal protein L13"/>
    <property type="match status" value="1"/>
</dbReference>
<dbReference type="Gene3D" id="3.90.1180.10">
    <property type="entry name" value="Ribosomal protein L13"/>
    <property type="match status" value="1"/>
</dbReference>
<dbReference type="HAMAP" id="MF_01366">
    <property type="entry name" value="Ribosomal_uL13"/>
    <property type="match status" value="1"/>
</dbReference>
<dbReference type="InterPro" id="IPR005822">
    <property type="entry name" value="Ribosomal_uL13"/>
</dbReference>
<dbReference type="InterPro" id="IPR005823">
    <property type="entry name" value="Ribosomal_uL13_bac-type"/>
</dbReference>
<dbReference type="InterPro" id="IPR023563">
    <property type="entry name" value="Ribosomal_uL13_CS"/>
</dbReference>
<dbReference type="InterPro" id="IPR036899">
    <property type="entry name" value="Ribosomal_uL13_sf"/>
</dbReference>
<dbReference type="NCBIfam" id="TIGR01066">
    <property type="entry name" value="rplM_bact"/>
    <property type="match status" value="1"/>
</dbReference>
<dbReference type="PANTHER" id="PTHR11545:SF2">
    <property type="entry name" value="LARGE RIBOSOMAL SUBUNIT PROTEIN UL13M"/>
    <property type="match status" value="1"/>
</dbReference>
<dbReference type="PANTHER" id="PTHR11545">
    <property type="entry name" value="RIBOSOMAL PROTEIN L13"/>
    <property type="match status" value="1"/>
</dbReference>
<dbReference type="Pfam" id="PF00572">
    <property type="entry name" value="Ribosomal_L13"/>
    <property type="match status" value="1"/>
</dbReference>
<dbReference type="PIRSF" id="PIRSF002181">
    <property type="entry name" value="Ribosomal_L13"/>
    <property type="match status" value="1"/>
</dbReference>
<dbReference type="SUPFAM" id="SSF52161">
    <property type="entry name" value="Ribosomal protein L13"/>
    <property type="match status" value="1"/>
</dbReference>
<dbReference type="PROSITE" id="PS00783">
    <property type="entry name" value="RIBOSOMAL_L13"/>
    <property type="match status" value="1"/>
</dbReference>
<proteinExistence type="inferred from homology"/>